<keyword id="KW-0027">Amidation</keyword>
<keyword id="KW-0165">Cleavage on pair of basic residues</keyword>
<keyword id="KW-0903">Direct protein sequencing</keyword>
<keyword id="KW-0527">Neuropeptide</keyword>
<keyword id="KW-0964">Secreted</keyword>
<reference key="1">
    <citation type="journal article" date="1993" name="Proc. Natl. Acad. Sci. U.S.A.">
        <title>Callatostatins: neuropeptides from the blowfly Calliphora vomitoria with sequence homology to cockroach allatostatins.</title>
        <authorList>
            <person name="Duve H."/>
            <person name="Johnsen A.H."/>
            <person name="Scott A.G."/>
            <person name="Yu C.G."/>
            <person name="Yagi K.J."/>
            <person name="Tobe S.S."/>
            <person name="Thorpe A."/>
        </authorList>
    </citation>
    <scope>PROTEIN SEQUENCE</scope>
    <scope>AMIDATION AT LEU-16</scope>
    <source>
        <tissue>Brain</tissue>
        <tissue>Head</tissue>
        <tissue>Thoracic ganglion</tissue>
    </source>
</reference>
<reference key="2">
    <citation type="journal article" date="1994" name="Cell Tissue Res.">
        <title>Distribution and functional significance of Leu-callatostatins in the blowfly Calliphora vomitoria.</title>
        <authorList>
            <person name="Duve H."/>
            <person name="Thorpe A."/>
        </authorList>
    </citation>
    <scope>CHARACTERIZATION</scope>
</reference>
<protein>
    <recommendedName>
        <fullName>Callatostatin-1</fullName>
    </recommendedName>
    <alternativeName>
        <fullName>Leu-callatostatin-1</fullName>
    </alternativeName>
    <component>
        <recommendedName>
            <fullName>Callatostatin-2</fullName>
        </recommendedName>
        <alternativeName>
            <fullName>Leu-callatostatin-2</fullName>
        </alternativeName>
    </component>
    <component>
        <recommendedName>
            <fullName>Callatostatin-3</fullName>
        </recommendedName>
        <alternativeName>
            <fullName>Leu-callatostatin-3</fullName>
        </alternativeName>
    </component>
</protein>
<feature type="peptide" id="PRO_0000001178" description="Callatostatin-1" evidence="1">
    <location>
        <begin position="1"/>
        <end position="16"/>
    </location>
</feature>
<feature type="peptide" id="PRO_0000001179" description="Callatostatin-2" evidence="1">
    <location>
        <begin position="3"/>
        <end position="16"/>
    </location>
</feature>
<feature type="peptide" id="PRO_0000001180" description="Callatostatin-3" evidence="1">
    <location>
        <begin position="9"/>
        <end position="16"/>
    </location>
</feature>
<feature type="modified residue" description="Leucine amide" evidence="1">
    <location>
        <position position="16"/>
    </location>
</feature>
<accession>P41839</accession>
<comment type="function">
    <text>May act as a neurotransmitter or neuromodulator and play a role in the integration of information within the brain. May be involved in the control of visceral muscles due to its ability to behave as potent inhibitors of peristaltic movements. May also fulfill a neurohormonal role on muscles of the gut and heart.</text>
</comment>
<comment type="subcellular location">
    <subcellularLocation>
        <location>Secreted</location>
    </subcellularLocation>
</comment>
<comment type="tissue specificity">
    <text>Brain, subesophageal ganglion, retrocerebral complex, thoracico-abdominal ganglion, peripheral neurosecretory system and intestine.</text>
</comment>
<comment type="similarity">
    <text evidence="2">Belongs to the allatostatin family.</text>
</comment>
<sequence length="16" mass="1907">DPLNEERRANRYGFGL</sequence>
<evidence type="ECO:0000269" key="1">
    <source>
    </source>
</evidence>
<evidence type="ECO:0000305" key="2"/>
<proteinExistence type="evidence at protein level"/>
<organism>
    <name type="scientific">Calliphora vomitoria</name>
    <name type="common">Blue bottle fly</name>
    <name type="synonym">Musca vomitoria</name>
    <dbReference type="NCBI Taxonomy" id="27454"/>
    <lineage>
        <taxon>Eukaryota</taxon>
        <taxon>Metazoa</taxon>
        <taxon>Ecdysozoa</taxon>
        <taxon>Arthropoda</taxon>
        <taxon>Hexapoda</taxon>
        <taxon>Insecta</taxon>
        <taxon>Pterygota</taxon>
        <taxon>Neoptera</taxon>
        <taxon>Endopterygota</taxon>
        <taxon>Diptera</taxon>
        <taxon>Brachycera</taxon>
        <taxon>Muscomorpha</taxon>
        <taxon>Oestroidea</taxon>
        <taxon>Calliphoridae</taxon>
        <taxon>Calliphorinae</taxon>
        <taxon>Calliphora</taxon>
    </lineage>
</organism>
<name>ALL1_CALVO</name>
<dbReference type="PIR" id="A47393">
    <property type="entry name" value="A47393"/>
</dbReference>
<dbReference type="GO" id="GO:0005576">
    <property type="term" value="C:extracellular region"/>
    <property type="evidence" value="ECO:0007669"/>
    <property type="project" value="UniProtKB-SubCell"/>
</dbReference>
<dbReference type="GO" id="GO:0007218">
    <property type="term" value="P:neuropeptide signaling pathway"/>
    <property type="evidence" value="ECO:0007669"/>
    <property type="project" value="UniProtKB-KW"/>
</dbReference>